<evidence type="ECO:0000250" key="1">
    <source>
        <dbReference type="UniProtKB" id="P91193"/>
    </source>
</evidence>
<evidence type="ECO:0000250" key="2">
    <source>
        <dbReference type="UniProtKB" id="Q8N5G2"/>
    </source>
</evidence>
<evidence type="ECO:0000255" key="3"/>
<evidence type="ECO:0000256" key="4">
    <source>
        <dbReference type="SAM" id="MobiDB-lite"/>
    </source>
</evidence>
<evidence type="ECO:0000269" key="5">
    <source>
    </source>
</evidence>
<evidence type="ECO:0000303" key="6">
    <source>
    </source>
</evidence>
<evidence type="ECO:0000305" key="7"/>
<evidence type="ECO:0000312" key="8">
    <source>
        <dbReference type="MGI" id="MGI:1913396"/>
    </source>
</evidence>
<evidence type="ECO:0007744" key="9">
    <source>
    </source>
</evidence>
<evidence type="ECO:0007744" key="10">
    <source>
    </source>
</evidence>
<comment type="function">
    <text evidence="2">Plays a role in the regulation of neuronal activity.</text>
</comment>
<comment type="subcellular location">
    <subcellularLocation>
        <location evidence="1">Rough endoplasmic reticulum membrane</location>
        <topology evidence="3">Multi-pass membrane protein</topology>
    </subcellularLocation>
    <subcellularLocation>
        <location evidence="1">Nucleus membrane</location>
        <topology evidence="3">Multi-pass membrane protein</topology>
    </subcellularLocation>
    <text evidence="5">Detected in the nucleus membrane of non-neuronal cells and in axonal outgrowths of neuronal cells (PubMed:15255972).</text>
</comment>
<comment type="tissue specificity">
    <text evidence="5">Strong expression in whole nervous system up to 12.5 dpc. Highly expressed in all neuronal differentiation fields from 14.5 dpc to birth, with highest expression in the telencephalic cortical plate and mitral cells in the olfactory bulb, and lower expression in neuronal progenitor zones. Progressively decreased expression in fields of neuron precursor proliferation from 14.5 dpc and virtually undetectable there by 17.5 dpc. No significant expression detected outside the nervous system. After birth, significant expression remains in the cerebellum, olfactory bulb and hippocampus.</text>
</comment>
<comment type="developmental stage">
    <text evidence="5">In the embryo, stronger expression at 15.5 dpc than at 10.5 dpc or 19.5 dpc. Expression decreases after birth although significant expression remains associated with some neuronal structures at P10.</text>
</comment>
<comment type="similarity">
    <text evidence="7">Belongs to the macoilin family.</text>
</comment>
<reference key="1">
    <citation type="journal article" date="2004" name="Eur. J. Neurosci.">
        <title>Identification of a novel brain-specific and Reelin-regulated gene that encodes a protein colocalized with synapsin.</title>
        <authorList>
            <person name="Kuvbachieva A."/>
            <person name="Bestel A.M."/>
            <person name="Tissir F."/>
            <person name="Maloum I."/>
            <person name="Guimiot F."/>
            <person name="Ramoz N."/>
            <person name="Bourgeois F."/>
            <person name="Moalic J.M."/>
            <person name="Goffinet A.M."/>
            <person name="Simonneau M."/>
        </authorList>
    </citation>
    <scope>NUCLEOTIDE SEQUENCE [MRNA]</scope>
    <scope>SUBCELLULAR LOCATION</scope>
    <scope>TISSUE SPECIFICITY</scope>
    <scope>DEVELOPMENTAL STAGE</scope>
    <source>
        <strain>BALB/cJ</strain>
        <tissue>Brain</tissue>
    </source>
</reference>
<reference key="2">
    <citation type="submission" date="2004-12" db="EMBL/GenBank/DDBJ databases">
        <title>Identification of Macoilin as a novel membrane-associated coiled-coil tetraspanin protein.</title>
        <authorList>
            <person name="Huang C.-H."/>
            <person name="Peng J."/>
            <person name="Chen Y."/>
        </authorList>
    </citation>
    <scope>NUCLEOTIDE SEQUENCE [MRNA]</scope>
    <source>
        <strain>C57BL/6J</strain>
    </source>
</reference>
<reference key="3">
    <citation type="journal article" date="2004" name="Genome Res.">
        <title>The status, quality, and expansion of the NIH full-length cDNA project: the Mammalian Gene Collection (MGC).</title>
        <authorList>
            <consortium name="The MGC Project Team"/>
        </authorList>
    </citation>
    <scope>NUCLEOTIDE SEQUENCE [LARGE SCALE MRNA]</scope>
    <source>
        <strain>C57BL/6J</strain>
        <tissue>Brain</tissue>
    </source>
</reference>
<reference key="4">
    <citation type="journal article" date="2007" name="Proc. Natl. Acad. Sci. U.S.A.">
        <title>Large-scale phosphorylation analysis of mouse liver.</title>
        <authorList>
            <person name="Villen J."/>
            <person name="Beausoleil S.A."/>
            <person name="Gerber S.A."/>
            <person name="Gygi S.P."/>
        </authorList>
    </citation>
    <scope>PHOSPHORYLATION [LARGE SCALE ANALYSIS] AT SER-332</scope>
    <scope>IDENTIFICATION BY MASS SPECTROMETRY [LARGE SCALE ANALYSIS]</scope>
    <source>
        <tissue>Liver</tissue>
    </source>
</reference>
<reference key="5">
    <citation type="journal article" date="2010" name="Cell">
        <title>A tissue-specific atlas of mouse protein phosphorylation and expression.</title>
        <authorList>
            <person name="Huttlin E.L."/>
            <person name="Jedrychowski M.P."/>
            <person name="Elias J.E."/>
            <person name="Goswami T."/>
            <person name="Rad R."/>
            <person name="Beausoleil S.A."/>
            <person name="Villen J."/>
            <person name="Haas W."/>
            <person name="Sowa M.E."/>
            <person name="Gygi S.P."/>
        </authorList>
    </citation>
    <scope>PHOSPHORYLATION [LARGE SCALE ANALYSIS] AT SER-332</scope>
    <scope>IDENTIFICATION BY MASS SPECTROMETRY [LARGE SCALE ANALYSIS]</scope>
    <source>
        <tissue>Kidney</tissue>
        <tissue>Liver</tissue>
        <tissue>Lung</tissue>
        <tissue>Pancreas</tissue>
        <tissue>Testis</tissue>
    </source>
</reference>
<accession>Q7TQE6</accession>
<proteinExistence type="evidence at protein level"/>
<gene>
    <name type="primary">Maco1</name>
    <name evidence="8" type="synonym">Tmem57</name>
</gene>
<organism>
    <name type="scientific">Mus musculus</name>
    <name type="common">Mouse</name>
    <dbReference type="NCBI Taxonomy" id="10090"/>
    <lineage>
        <taxon>Eukaryota</taxon>
        <taxon>Metazoa</taxon>
        <taxon>Chordata</taxon>
        <taxon>Craniata</taxon>
        <taxon>Vertebrata</taxon>
        <taxon>Euteleostomi</taxon>
        <taxon>Mammalia</taxon>
        <taxon>Eutheria</taxon>
        <taxon>Euarchontoglires</taxon>
        <taxon>Glires</taxon>
        <taxon>Rodentia</taxon>
        <taxon>Myomorpha</taxon>
        <taxon>Muroidea</taxon>
        <taxon>Muridae</taxon>
        <taxon>Murinae</taxon>
        <taxon>Mus</taxon>
        <taxon>Mus</taxon>
    </lineage>
</organism>
<keyword id="KW-0256">Endoplasmic reticulum</keyword>
<keyword id="KW-0325">Glycoprotein</keyword>
<keyword id="KW-0472">Membrane</keyword>
<keyword id="KW-0539">Nucleus</keyword>
<keyword id="KW-0597">Phosphoprotein</keyword>
<keyword id="KW-1185">Reference proteome</keyword>
<keyword id="KW-0812">Transmembrane</keyword>
<keyword id="KW-1133">Transmembrane helix</keyword>
<dbReference type="EMBL" id="AY364165">
    <property type="protein sequence ID" value="AAQ64008.1"/>
    <property type="molecule type" value="mRNA"/>
</dbReference>
<dbReference type="EMBL" id="AY846873">
    <property type="protein sequence ID" value="AAX77385.1"/>
    <property type="molecule type" value="mRNA"/>
</dbReference>
<dbReference type="EMBL" id="AY846874">
    <property type="protein sequence ID" value="AAX77386.1"/>
    <property type="molecule type" value="mRNA"/>
</dbReference>
<dbReference type="EMBL" id="BC054769">
    <property type="protein sequence ID" value="AAH54769.1"/>
    <property type="molecule type" value="mRNA"/>
</dbReference>
<dbReference type="CCDS" id="CCDS18777.1"/>
<dbReference type="RefSeq" id="NP_079658.2">
    <property type="nucleotide sequence ID" value="NM_025382.6"/>
</dbReference>
<dbReference type="SMR" id="Q7TQE6"/>
<dbReference type="BioGRID" id="211249">
    <property type="interactions" value="3"/>
</dbReference>
<dbReference type="FunCoup" id="Q7TQE6">
    <property type="interactions" value="3413"/>
</dbReference>
<dbReference type="IntAct" id="Q7TQE6">
    <property type="interactions" value="1"/>
</dbReference>
<dbReference type="STRING" id="10090.ENSMUSP00000030628"/>
<dbReference type="GlyCosmos" id="Q7TQE6">
    <property type="glycosylation" value="4 sites, No reported glycans"/>
</dbReference>
<dbReference type="GlyGen" id="Q7TQE6">
    <property type="glycosylation" value="6 sites, 1 N-linked glycan (1 site), 1 O-linked glycan (1 site)"/>
</dbReference>
<dbReference type="iPTMnet" id="Q7TQE6"/>
<dbReference type="PhosphoSitePlus" id="Q7TQE6"/>
<dbReference type="jPOST" id="Q7TQE6"/>
<dbReference type="PaxDb" id="10090-ENSMUSP00000030628"/>
<dbReference type="PeptideAtlas" id="Q7TQE6"/>
<dbReference type="ProteomicsDB" id="292074"/>
<dbReference type="Pumba" id="Q7TQE6"/>
<dbReference type="Antibodypedia" id="15928">
    <property type="antibodies" value="78 antibodies from 17 providers"/>
</dbReference>
<dbReference type="DNASU" id="66146"/>
<dbReference type="Ensembl" id="ENSMUST00000030628.15">
    <property type="protein sequence ID" value="ENSMUSP00000030628.8"/>
    <property type="gene ID" value="ENSMUSG00000028826.15"/>
</dbReference>
<dbReference type="GeneID" id="66146"/>
<dbReference type="KEGG" id="mmu:66146"/>
<dbReference type="UCSC" id="uc008vfq.2">
    <property type="organism name" value="mouse"/>
</dbReference>
<dbReference type="AGR" id="MGI:1913396"/>
<dbReference type="CTD" id="55219"/>
<dbReference type="MGI" id="MGI:1913396">
    <property type="gene designation" value="Maco1"/>
</dbReference>
<dbReference type="VEuPathDB" id="HostDB:ENSMUSG00000028826"/>
<dbReference type="eggNOG" id="KOG1821">
    <property type="taxonomic scope" value="Eukaryota"/>
</dbReference>
<dbReference type="GeneTree" id="ENSGT00390000016613"/>
<dbReference type="HOGENOM" id="CLU_012823_1_0_1"/>
<dbReference type="InParanoid" id="Q7TQE6"/>
<dbReference type="OMA" id="ENTHADT"/>
<dbReference type="OrthoDB" id="10071111at2759"/>
<dbReference type="PhylomeDB" id="Q7TQE6"/>
<dbReference type="TreeFam" id="TF324023"/>
<dbReference type="Reactome" id="R-MMU-8980692">
    <property type="pathway name" value="RHOA GTPase cycle"/>
</dbReference>
<dbReference type="Reactome" id="R-MMU-9013106">
    <property type="pathway name" value="RHOC GTPase cycle"/>
</dbReference>
<dbReference type="BioGRID-ORCS" id="66146">
    <property type="hits" value="1 hit in 77 CRISPR screens"/>
</dbReference>
<dbReference type="ChiTaRS" id="Tmem57">
    <property type="organism name" value="mouse"/>
</dbReference>
<dbReference type="PRO" id="PR:Q7TQE6"/>
<dbReference type="Proteomes" id="UP000000589">
    <property type="component" value="Chromosome 4"/>
</dbReference>
<dbReference type="RNAct" id="Q7TQE6">
    <property type="molecule type" value="protein"/>
</dbReference>
<dbReference type="Bgee" id="ENSMUSG00000028826">
    <property type="expression patterns" value="Expressed in superior cervical ganglion and 224 other cell types or tissues"/>
</dbReference>
<dbReference type="ExpressionAtlas" id="Q7TQE6">
    <property type="expression patterns" value="baseline and differential"/>
</dbReference>
<dbReference type="GO" id="GO:0030424">
    <property type="term" value="C:axon"/>
    <property type="evidence" value="ECO:0000314"/>
    <property type="project" value="MGI"/>
</dbReference>
<dbReference type="GO" id="GO:0043005">
    <property type="term" value="C:neuron projection"/>
    <property type="evidence" value="ECO:0000314"/>
    <property type="project" value="MGI"/>
</dbReference>
<dbReference type="GO" id="GO:0044306">
    <property type="term" value="C:neuron projection terminus"/>
    <property type="evidence" value="ECO:0000314"/>
    <property type="project" value="BHF-UCL"/>
</dbReference>
<dbReference type="GO" id="GO:0031965">
    <property type="term" value="C:nuclear membrane"/>
    <property type="evidence" value="ECO:0000314"/>
    <property type="project" value="BHF-UCL"/>
</dbReference>
<dbReference type="GO" id="GO:0005634">
    <property type="term" value="C:nucleus"/>
    <property type="evidence" value="ECO:0000314"/>
    <property type="project" value="MGI"/>
</dbReference>
<dbReference type="GO" id="GO:0030867">
    <property type="term" value="C:rough endoplasmic reticulum membrane"/>
    <property type="evidence" value="ECO:0000250"/>
    <property type="project" value="UniProtKB"/>
</dbReference>
<dbReference type="GO" id="GO:0045202">
    <property type="term" value="C:synapse"/>
    <property type="evidence" value="ECO:0000314"/>
    <property type="project" value="BHF-UCL"/>
</dbReference>
<dbReference type="GO" id="GO:0007420">
    <property type="term" value="P:brain development"/>
    <property type="evidence" value="ECO:0000270"/>
    <property type="project" value="BHF-UCL"/>
</dbReference>
<dbReference type="GO" id="GO:0023041">
    <property type="term" value="P:neuronal signal transduction"/>
    <property type="evidence" value="ECO:0000250"/>
    <property type="project" value="UniProtKB"/>
</dbReference>
<dbReference type="InterPro" id="IPR019130">
    <property type="entry name" value="Macoilin"/>
</dbReference>
<dbReference type="PANTHER" id="PTHR47464">
    <property type="entry name" value="MACOILIN"/>
    <property type="match status" value="1"/>
</dbReference>
<dbReference type="PANTHER" id="PTHR47464:SF2">
    <property type="entry name" value="MACOILIN"/>
    <property type="match status" value="1"/>
</dbReference>
<dbReference type="Pfam" id="PF09726">
    <property type="entry name" value="Macoilin"/>
    <property type="match status" value="1"/>
</dbReference>
<name>MACOI_MOUSE</name>
<protein>
    <recommendedName>
        <fullName>Macoilin</fullName>
    </recommendedName>
    <alternativeName>
        <fullName evidence="6">Brain-specific adapter protein C61</fullName>
    </alternativeName>
    <alternativeName>
        <fullName>Macoilin-1</fullName>
    </alternativeName>
    <alternativeName>
        <fullName>Transmembrane protein 57</fullName>
    </alternativeName>
</protein>
<feature type="chain" id="PRO_0000070268" description="Macoilin">
    <location>
        <begin position="1"/>
        <end position="664"/>
    </location>
</feature>
<feature type="transmembrane region" description="Helical" evidence="3">
    <location>
        <begin position="28"/>
        <end position="48"/>
    </location>
</feature>
<feature type="transmembrane region" description="Helical" evidence="3">
    <location>
        <begin position="75"/>
        <end position="95"/>
    </location>
</feature>
<feature type="transmembrane region" description="Helical" evidence="3">
    <location>
        <begin position="120"/>
        <end position="140"/>
    </location>
</feature>
<feature type="transmembrane region" description="Helical" evidence="3">
    <location>
        <begin position="154"/>
        <end position="174"/>
    </location>
</feature>
<feature type="region of interest" description="Disordered" evidence="4">
    <location>
        <begin position="253"/>
        <end position="274"/>
    </location>
</feature>
<feature type="region of interest" description="Disordered" evidence="4">
    <location>
        <begin position="320"/>
        <end position="375"/>
    </location>
</feature>
<feature type="region of interest" description="Disordered" evidence="4">
    <location>
        <begin position="630"/>
        <end position="664"/>
    </location>
</feature>
<feature type="compositionally biased region" description="Basic and acidic residues" evidence="4">
    <location>
        <begin position="253"/>
        <end position="265"/>
    </location>
</feature>
<feature type="compositionally biased region" description="Polar residues" evidence="4">
    <location>
        <begin position="320"/>
        <end position="348"/>
    </location>
</feature>
<feature type="modified residue" description="Phosphoserine" evidence="2">
    <location>
        <position position="305"/>
    </location>
</feature>
<feature type="modified residue" description="Phosphoserine" evidence="9 10">
    <location>
        <position position="332"/>
    </location>
</feature>
<feature type="modified residue" description="Phosphoserine" evidence="2">
    <location>
        <position position="631"/>
    </location>
</feature>
<feature type="modified residue" description="Phosphoserine" evidence="2">
    <location>
        <position position="634"/>
    </location>
</feature>
<feature type="glycosylation site" description="N-linked (GlcNAc...) asparagine" evidence="3">
    <location>
        <position position="324"/>
    </location>
</feature>
<feature type="glycosylation site" description="N-linked (GlcNAc...) asparagine" evidence="3">
    <location>
        <position position="340"/>
    </location>
</feature>
<feature type="glycosylation site" description="N-linked (GlcNAc...) asparagine" evidence="3">
    <location>
        <position position="452"/>
    </location>
</feature>
<feature type="glycosylation site" description="N-linked (GlcNAc...) asparagine" evidence="3">
    <location>
        <position position="655"/>
    </location>
</feature>
<sequence length="664" mass="76089">MKRRNADCSKLRRPLKRNRITEGIYGSTFLYLKFLVVWALVLLADFVLEFRFEYLWPFWLFIRSVYDSFRYQGLAFSVFFVCVAFTSNIICLLFIPIQWLFFAASTYVWVQYVWHTERGVCLPTVSLWILFVYIEAAIRFKDLKNFHVDLCRPFAAHCIGYPVVTLGFGFKSYVSYKMRLRKQKEVQKENEFYMQLLQQALPPEQQMLQKQEKEAEEAAKGLPDMDSSILIHHNGGIPANKKLSTTLPEIEYREKGKEKDKDAKKHNLGINNNNILQPVDSKIQEIEYMENHINSKRLNNDLVGSTENLLKEDSCTASSKNYKNASGVVNSSPRSHSATNGSIPSSSSKNEKKQKCTSKGPSAHKDLMENCIPNNQLSKPDALVRLEQDIKKLKADLQASRQVEQELRSQISALSSTERGIRSEMGQLRQENELLQNKLHNAVQMKQKDKQNISQLEKKLKAEQEARSFVEKQLMEEKKRKKLEEATAARAVAFAAASRGECTETLRSRIRELEAEGKKLTMDMKVKEEQIRELELKVQELRKYKENEKDTEVLMSALSAMQDKTQHLENSLSAETRIKLDLFSALGDAKRQLEIAQGQILQKDQEIKDLKQKIAEVMAVMPSITYSAATSPLSPVSPHYSSKFVETSPSGLDPNASVYQPLKK</sequence>